<proteinExistence type="evidence at transcript level"/>
<accession>Q6YLX9</accession>
<feature type="chain" id="PRO_0000343173" description="Two pore calcium channel protein 1">
    <location>
        <begin position="1"/>
        <end position="742"/>
    </location>
</feature>
<feature type="topological domain" description="Cytoplasmic" evidence="2">
    <location>
        <begin position="1"/>
        <end position="82"/>
    </location>
</feature>
<feature type="transmembrane region" description="Helical; Name=S1 of repeat I" evidence="2">
    <location>
        <begin position="83"/>
        <end position="103"/>
    </location>
</feature>
<feature type="topological domain" description="Extracellular" evidence="2">
    <location>
        <begin position="104"/>
        <end position="140"/>
    </location>
</feature>
<feature type="transmembrane region" description="Helical; Name=S2 of repeat I" evidence="2">
    <location>
        <begin position="141"/>
        <end position="161"/>
    </location>
</feature>
<feature type="topological domain" description="Cytoplasmic" evidence="2">
    <location>
        <begin position="162"/>
        <end position="176"/>
    </location>
</feature>
<feature type="transmembrane region" description="Helical; Name=S3 of repeat I" evidence="2">
    <location>
        <begin position="177"/>
        <end position="197"/>
    </location>
</feature>
<feature type="topological domain" description="Extracellular" evidence="2">
    <location>
        <begin position="198"/>
        <end position="204"/>
    </location>
</feature>
<feature type="transmembrane region" description="Helical; Voltage-sensor; Name=S4 of repeat I" evidence="2">
    <location>
        <begin position="205"/>
        <end position="226"/>
    </location>
</feature>
<feature type="transmembrane region" description="Helical; Name=S5 of repeat I" evidence="2">
    <location>
        <begin position="227"/>
        <end position="247"/>
    </location>
</feature>
<feature type="topological domain" description="Extracellular" evidence="2">
    <location>
        <begin position="248"/>
        <end position="258"/>
    </location>
</feature>
<feature type="intramembrane region" description="Pore-forming; Name=Pore-forming 1">
    <location>
        <begin position="259"/>
        <end position="273"/>
    </location>
</feature>
<feature type="topological domain" description="Extracellular" evidence="2">
    <location>
        <begin position="274"/>
        <end position="296"/>
    </location>
</feature>
<feature type="transmembrane region" description="Helical; Name=S6 of repeat I" evidence="2">
    <location>
        <begin position="297"/>
        <end position="317"/>
    </location>
</feature>
<feature type="topological domain" description="Cytoplasmic" evidence="2">
    <location>
        <begin position="318"/>
        <end position="446"/>
    </location>
</feature>
<feature type="transmembrane region" description="Helical; Name=S1 of repeat II" evidence="2">
    <location>
        <begin position="447"/>
        <end position="467"/>
    </location>
</feature>
<feature type="topological domain" description="Extracellular" evidence="2">
    <location>
        <begin position="468"/>
        <end position="480"/>
    </location>
</feature>
<feature type="transmembrane region" description="Helical; Name=S2 of repeat II" evidence="2">
    <location>
        <begin position="481"/>
        <end position="501"/>
    </location>
</feature>
<feature type="topological domain" description="Cytoplasmic" evidence="2">
    <location>
        <begin position="502"/>
        <end position="510"/>
    </location>
</feature>
<feature type="transmembrane region" description="Helical; Name=S3 of repeat II" evidence="2">
    <location>
        <begin position="511"/>
        <end position="531"/>
    </location>
</feature>
<feature type="topological domain" description="Extracellular" evidence="2">
    <location>
        <begin position="532"/>
        <end position="540"/>
    </location>
</feature>
<feature type="transmembrane region" description="Helical; Voltage-sensor; Name=S4 of repeat II" evidence="2">
    <location>
        <begin position="541"/>
        <end position="558"/>
    </location>
</feature>
<feature type="topological domain" description="Cytoplasmic" evidence="2">
    <location>
        <begin position="559"/>
        <end position="582"/>
    </location>
</feature>
<feature type="transmembrane region" description="Helical; Name=S5 of repeat II" evidence="2">
    <location>
        <begin position="583"/>
        <end position="603"/>
    </location>
</feature>
<feature type="topological domain" description="Extracellular" evidence="2">
    <location>
        <begin position="604"/>
        <end position="627"/>
    </location>
</feature>
<feature type="intramembrane region" description="Pore-forming; Name=Pore-forming 2">
    <location>
        <begin position="628"/>
        <end position="642"/>
    </location>
</feature>
<feature type="topological domain" description="Extracellular" evidence="2">
    <location>
        <begin position="643"/>
        <end position="663"/>
    </location>
</feature>
<feature type="transmembrane region" description="Helical; Name=S6 of repeat II" evidence="2">
    <location>
        <begin position="664"/>
        <end position="684"/>
    </location>
</feature>
<feature type="topological domain" description="Cytoplasmic" evidence="2">
    <location>
        <begin position="685"/>
        <end position="742"/>
    </location>
</feature>
<feature type="domain" description="EF-hand 1" evidence="3">
    <location>
        <begin position="335"/>
        <end position="370"/>
    </location>
</feature>
<feature type="domain" description="EF-hand 2" evidence="3">
    <location>
        <begin position="376"/>
        <end position="411"/>
    </location>
</feature>
<feature type="region of interest" description="Disordered" evidence="4">
    <location>
        <begin position="1"/>
        <end position="37"/>
    </location>
</feature>
<feature type="glycosylation site" description="N-linked (GlcNAc...) asparagine" evidence="2">
    <location>
        <position position="469"/>
    </location>
</feature>
<gene>
    <name type="primary">TPC1</name>
</gene>
<comment type="function">
    <text>Functions as a voltage-gated inward-rectifying Ca(2+) channel (VDCC) across the plasma membrane that mediates sucrose-induced Ca(2+) influx in autotrophically grown leaf cells. Acts as the major ROS-responsive Ca(2+) channel and is the possible target of Al-dependent inhibition. Plays a regulatory role in defense responses.</text>
</comment>
<comment type="activity regulation">
    <text evidence="1">Inhibited by Al(3+).</text>
</comment>
<comment type="subunit">
    <text evidence="1">Homodimer.</text>
</comment>
<comment type="subcellular location">
    <subcellularLocation>
        <location evidence="5">Membrane</location>
        <topology evidence="5">Multi-pass membrane protein</topology>
    </subcellularLocation>
</comment>
<comment type="induction">
    <text evidence="5">By high salinity, PEG, cold shock, and abscisic acid (ABA).</text>
</comment>
<comment type="domain">
    <text evidence="1">Each of the two internal repeats contains five hydrophobic transmembrane segments (S1, S2, S3, S5, S6) and one positively charged transmembrane segment (S4). S4 segments probably represent the voltage-sensor and are characterized by a series of positively charged amino acids (By similarity).</text>
</comment>
<comment type="similarity">
    <text evidence="6">Belongs to the calcium channel alpha-1 subunit (TC 1.A.1.11) family. Two pore calcium channel subfamily.</text>
</comment>
<keyword id="KW-0106">Calcium</keyword>
<keyword id="KW-0107">Calcium channel</keyword>
<keyword id="KW-0109">Calcium transport</keyword>
<keyword id="KW-0325">Glycoprotein</keyword>
<keyword id="KW-0407">Ion channel</keyword>
<keyword id="KW-0406">Ion transport</keyword>
<keyword id="KW-0472">Membrane</keyword>
<keyword id="KW-0611">Plant defense</keyword>
<keyword id="KW-1185">Reference proteome</keyword>
<keyword id="KW-0677">Repeat</keyword>
<keyword id="KW-0812">Transmembrane</keyword>
<keyword id="KW-1133">Transmembrane helix</keyword>
<keyword id="KW-0813">Transport</keyword>
<keyword id="KW-0851">Voltage-gated channel</keyword>
<evidence type="ECO:0000250" key="1"/>
<evidence type="ECO:0000255" key="2"/>
<evidence type="ECO:0000255" key="3">
    <source>
        <dbReference type="PROSITE-ProRule" id="PRU00448"/>
    </source>
</evidence>
<evidence type="ECO:0000256" key="4">
    <source>
        <dbReference type="SAM" id="MobiDB-lite"/>
    </source>
</evidence>
<evidence type="ECO:0000269" key="5">
    <source>
    </source>
</evidence>
<evidence type="ECO:0000305" key="6"/>
<name>TPC1_WHEAT</name>
<reference key="1">
    <citation type="journal article" date="2005" name="J. Exp. Bot.">
        <title>Functional analysis of a putative Ca(2+) channel gene TaTPC1 from wheat.</title>
        <authorList>
            <person name="Wang Y.-J."/>
            <person name="Yu J.-N."/>
            <person name="Chen T."/>
            <person name="Zhang Z.-G."/>
            <person name="Hao Y.-J."/>
            <person name="Zhang J.-S."/>
            <person name="Chen S.-Y."/>
        </authorList>
    </citation>
    <scope>NUCLEOTIDE SEQUENCE [MRNA]</scope>
    <scope>INDUCTION</scope>
    <scope>SUBCELLULAR LOCATION</scope>
    <source>
        <strain>cv. Chinese Spring</strain>
    </source>
</reference>
<organism>
    <name type="scientific">Triticum aestivum</name>
    <name type="common">Wheat</name>
    <dbReference type="NCBI Taxonomy" id="4565"/>
    <lineage>
        <taxon>Eukaryota</taxon>
        <taxon>Viridiplantae</taxon>
        <taxon>Streptophyta</taxon>
        <taxon>Embryophyta</taxon>
        <taxon>Tracheophyta</taxon>
        <taxon>Spermatophyta</taxon>
        <taxon>Magnoliopsida</taxon>
        <taxon>Liliopsida</taxon>
        <taxon>Poales</taxon>
        <taxon>Poaceae</taxon>
        <taxon>BOP clade</taxon>
        <taxon>Pooideae</taxon>
        <taxon>Triticodae</taxon>
        <taxon>Triticeae</taxon>
        <taxon>Triticinae</taxon>
        <taxon>Triticum</taxon>
    </lineage>
</organism>
<sequence length="742" mass="85647">MSEAEAPLITEEAAERGLASSGSRRLSDGAGGQGSRKYRRRSDALAYGDRYQKAAALVDLAEDGVGIPEDVLNDTRFGRAMSFYFVYLRLDWLWSLNLFALILLNFLEKPLWCRKDALQAYDQRDLYFLGQLPYFSKTESLIYEGLTLVILVMDIFCPLSYEGLNIFWRSTTNKLKIVLLFILACDILVFAFSSQPFRLAPYIRVVFLIMTIRELRMCAITLAGLIGTYLNVLALSLLFLLFASWLAYVTFEDTPQGKTIFSSYGVTLYQMFVLFTTSNNPDVWVHAYKIPRWYSLFFIVYVLLGVYFLTNLILAVIYDSFKEQFAKQLVQVDSIRKNILQKAFDLIDTNNRGYLDREQCISLLNELNKYRSLPKTSREDFELIFAELDRSGDFKVTSEEFADLCNTIAIKFQKEPPPSYLEKFPFYHSPLCGRLKSFVRSRMFEYIIVFVLLINLVAVIIETTLDIENSSSQETWQEVEFFLGWIYVAEMALKIFSLGFGAYWMEGQNKFDFVLTWTIFIGETLTFAFPSKLPFLSNGEWIRYLLLGRVLRLTRILLQVQRFRAFVATFFTLMSSLMPYLGIVFCVLCMYCSIGLQIFGGIVYAGNPTLEETDLFNNDYLLFNFNDYPSGMVTLFNLLVMGNWQVWMESYWQLTGTSWSLIYFVSFYLISILLLLNLIVAFVLEAFFAEMELEKGEEVDIQNPTSGGIKKRRSMRVRSKGTMVDILLHHMLSNELDGSQNS</sequence>
<dbReference type="EMBL" id="AY114121">
    <property type="protein sequence ID" value="AAM47032.1"/>
    <property type="molecule type" value="mRNA"/>
</dbReference>
<dbReference type="SMR" id="Q6YLX9"/>
<dbReference type="STRING" id="4565.Q6YLX9"/>
<dbReference type="GlyCosmos" id="Q6YLX9">
    <property type="glycosylation" value="1 site, No reported glycans"/>
</dbReference>
<dbReference type="PaxDb" id="4565-Traes_3DL_A58F69E34.1"/>
<dbReference type="eggNOG" id="KOG2301">
    <property type="taxonomic scope" value="Eukaryota"/>
</dbReference>
<dbReference type="Proteomes" id="UP000019116">
    <property type="component" value="Unplaced"/>
</dbReference>
<dbReference type="ExpressionAtlas" id="Q6YLX9">
    <property type="expression patterns" value="baseline and differential"/>
</dbReference>
<dbReference type="GO" id="GO:0034702">
    <property type="term" value="C:monoatomic ion channel complex"/>
    <property type="evidence" value="ECO:0007669"/>
    <property type="project" value="UniProtKB-KW"/>
</dbReference>
<dbReference type="GO" id="GO:0000325">
    <property type="term" value="C:plant-type vacuole"/>
    <property type="evidence" value="ECO:0000318"/>
    <property type="project" value="GO_Central"/>
</dbReference>
<dbReference type="GO" id="GO:0005774">
    <property type="term" value="C:vacuolar membrane"/>
    <property type="evidence" value="ECO:0000318"/>
    <property type="project" value="GO_Central"/>
</dbReference>
<dbReference type="GO" id="GO:0005509">
    <property type="term" value="F:calcium ion binding"/>
    <property type="evidence" value="ECO:0007669"/>
    <property type="project" value="InterPro"/>
</dbReference>
<dbReference type="GO" id="GO:0005245">
    <property type="term" value="F:voltage-gated calcium channel activity"/>
    <property type="evidence" value="ECO:0000318"/>
    <property type="project" value="GO_Central"/>
</dbReference>
<dbReference type="GO" id="GO:0006816">
    <property type="term" value="P:calcium ion transport"/>
    <property type="evidence" value="ECO:0000318"/>
    <property type="project" value="GO_Central"/>
</dbReference>
<dbReference type="GO" id="GO:0006952">
    <property type="term" value="P:defense response"/>
    <property type="evidence" value="ECO:0007669"/>
    <property type="project" value="UniProtKB-KW"/>
</dbReference>
<dbReference type="CDD" id="cd00051">
    <property type="entry name" value="EFh"/>
    <property type="match status" value="1"/>
</dbReference>
<dbReference type="FunFam" id="1.10.238.10:FF:000253">
    <property type="entry name" value="Two pore calcium channel protein 1"/>
    <property type="match status" value="1"/>
</dbReference>
<dbReference type="FunFam" id="1.10.287.70:FF:000094">
    <property type="entry name" value="Two pore calcium channel protein 1"/>
    <property type="match status" value="1"/>
</dbReference>
<dbReference type="FunFam" id="1.10.287.70:FF:000129">
    <property type="entry name" value="Two pore calcium channel protein 1"/>
    <property type="match status" value="1"/>
</dbReference>
<dbReference type="FunFam" id="1.20.120.350:FF:000055">
    <property type="entry name" value="Two pore calcium channel protein 1"/>
    <property type="match status" value="1"/>
</dbReference>
<dbReference type="Gene3D" id="1.10.287.70">
    <property type="match status" value="2"/>
</dbReference>
<dbReference type="Gene3D" id="1.10.238.10">
    <property type="entry name" value="EF-hand"/>
    <property type="match status" value="1"/>
</dbReference>
<dbReference type="Gene3D" id="1.20.120.350">
    <property type="entry name" value="Voltage-gated potassium channels. Chain C"/>
    <property type="match status" value="1"/>
</dbReference>
<dbReference type="InterPro" id="IPR011992">
    <property type="entry name" value="EF-hand-dom_pair"/>
</dbReference>
<dbReference type="InterPro" id="IPR002048">
    <property type="entry name" value="EF_hand_dom"/>
</dbReference>
<dbReference type="InterPro" id="IPR005821">
    <property type="entry name" value="Ion_trans_dom"/>
</dbReference>
<dbReference type="InterPro" id="IPR044581">
    <property type="entry name" value="TPC1_plant"/>
</dbReference>
<dbReference type="InterPro" id="IPR027359">
    <property type="entry name" value="Volt_channel_dom_sf"/>
</dbReference>
<dbReference type="PANTHER" id="PTHR46988">
    <property type="entry name" value="TWO PORE CALCIUM CHANNEL PROTEIN 1"/>
    <property type="match status" value="1"/>
</dbReference>
<dbReference type="PANTHER" id="PTHR46988:SF2">
    <property type="entry name" value="TWO PORE CALCIUM CHANNEL PROTEIN 1"/>
    <property type="match status" value="1"/>
</dbReference>
<dbReference type="Pfam" id="PF13499">
    <property type="entry name" value="EF-hand_7"/>
    <property type="match status" value="1"/>
</dbReference>
<dbReference type="Pfam" id="PF00520">
    <property type="entry name" value="Ion_trans"/>
    <property type="match status" value="2"/>
</dbReference>
<dbReference type="SMART" id="SM00054">
    <property type="entry name" value="EFh"/>
    <property type="match status" value="2"/>
</dbReference>
<dbReference type="SUPFAM" id="SSF47473">
    <property type="entry name" value="EF-hand"/>
    <property type="match status" value="1"/>
</dbReference>
<dbReference type="SUPFAM" id="SSF81324">
    <property type="entry name" value="Voltage-gated potassium channels"/>
    <property type="match status" value="1"/>
</dbReference>
<dbReference type="PROSITE" id="PS50222">
    <property type="entry name" value="EF_HAND_2"/>
    <property type="match status" value="2"/>
</dbReference>
<protein>
    <recommendedName>
        <fullName>Two pore calcium channel protein 1</fullName>
    </recommendedName>
    <alternativeName>
        <fullName>Voltage-dependent calcium channel protein TPC1</fullName>
        <shortName>TaTPC1</shortName>
    </alternativeName>
</protein>